<comment type="function">
    <text evidence="3 4">A methylase, recognizes the double-stranded sequence 5'-ACCGGT-3', methylates C-3 on both strands, and protects the DNA from cleavage by the AgeI endonuclease.</text>
</comment>
<comment type="catalytic activity">
    <reaction evidence="2">
        <text>a 2'-deoxycytidine in DNA + S-adenosyl-L-methionine = a 5-methyl-2'-deoxycytidine in DNA + S-adenosyl-L-homocysteine + H(+)</text>
        <dbReference type="Rhea" id="RHEA:13681"/>
        <dbReference type="Rhea" id="RHEA-COMP:11369"/>
        <dbReference type="Rhea" id="RHEA-COMP:11370"/>
        <dbReference type="ChEBI" id="CHEBI:15378"/>
        <dbReference type="ChEBI" id="CHEBI:57856"/>
        <dbReference type="ChEBI" id="CHEBI:59789"/>
        <dbReference type="ChEBI" id="CHEBI:85452"/>
        <dbReference type="ChEBI" id="CHEBI:85454"/>
        <dbReference type="EC" id="2.1.1.37"/>
    </reaction>
</comment>
<comment type="similarity">
    <text evidence="1">Belongs to the class I-like SAM-binding methyltransferase superfamily. C5-methyltransferase family.</text>
</comment>
<reference key="1">
    <citation type="journal article" date="1996" name="Biosci. Biotechnol. Biochem.">
        <title>Cloning and nucleotide sequence of the AgeI methylase gene from Agrobacterium gelatinovorum IAM 12617, a marine bacterium.</title>
        <authorList>
            <person name="Suzuki T."/>
            <person name="Sugimoto E."/>
            <person name="Tahara Y."/>
            <person name="Yamada Y."/>
        </authorList>
    </citation>
    <scope>NUCLEOTIDE SEQUENCE [GENOMIC DNA]</scope>
    <scope>FUNCTION</scope>
    <source>
        <strain>ATCC 25655 / DSM 5887 / JCM 20688 / IAM 12617 / NBRC 15761 / NCIMB 2206 / B6</strain>
    </source>
</reference>
<reference key="2">
    <citation type="patent" date="1999-04-26" number="EP0959131">
        <title>Method for cloning and producing AgeI restriction endonuclease in E.coli.</title>
        <authorList>
            <person name="Xu S.-Y."/>
            <person name="Maunus R.E."/>
            <person name="Lunnen K.D."/>
            <person name="Allen R."/>
        </authorList>
    </citation>
    <scope>NUCLEOTIDE SEQUENCE [GENOMIC DNA]</scope>
    <source>
        <strain>ATCC 25655 / DSM 5887 / JCM 20688 / IAM 12617 / NBRC 15761 / NCIMB 2206 / B6</strain>
    </source>
</reference>
<reference key="3">
    <citation type="journal article" date="2003" name="Nucleic Acids Res.">
        <title>A nomenclature for restriction enzymes, DNA methyltransferases, homing endonucleases and their genes.</title>
        <authorList>
            <person name="Roberts R.J."/>
            <person name="Belfort M."/>
            <person name="Bestor T."/>
            <person name="Bhagwat A.S."/>
            <person name="Bickle T.A."/>
            <person name="Bitinaite J."/>
            <person name="Blumenthal R.M."/>
            <person name="Degtyarev S.K."/>
            <person name="Dryden D.T."/>
            <person name="Dybvig K."/>
            <person name="Firman K."/>
            <person name="Gromova E.S."/>
            <person name="Gumport R.I."/>
            <person name="Halford S.E."/>
            <person name="Hattman S."/>
            <person name="Heitman J."/>
            <person name="Hornby D.P."/>
            <person name="Janulaitis A."/>
            <person name="Jeltsch A."/>
            <person name="Josephsen J."/>
            <person name="Kiss A."/>
            <person name="Klaenhammer T.R."/>
            <person name="Kobayashi I."/>
            <person name="Kong H."/>
            <person name="Krueger D.H."/>
            <person name="Lacks S."/>
            <person name="Marinus M.G."/>
            <person name="Miyahara M."/>
            <person name="Morgan R.D."/>
            <person name="Murray N.E."/>
            <person name="Nagaraja V."/>
            <person name="Piekarowicz A."/>
            <person name="Pingoud A."/>
            <person name="Raleigh E."/>
            <person name="Rao D.N."/>
            <person name="Reich N."/>
            <person name="Repin V.E."/>
            <person name="Selker E.U."/>
            <person name="Shaw P.C."/>
            <person name="Stein D.C."/>
            <person name="Stoddard B.L."/>
            <person name="Szybalski W."/>
            <person name="Trautner T.A."/>
            <person name="Van Etten J.L."/>
            <person name="Vitor J.M."/>
            <person name="Wilson G.G."/>
            <person name="Xu S.Y."/>
        </authorList>
    </citation>
    <scope>NOMENCLATURE</scope>
</reference>
<evidence type="ECO:0000255" key="1">
    <source>
        <dbReference type="PROSITE-ProRule" id="PRU01016"/>
    </source>
</evidence>
<evidence type="ECO:0000255" key="2">
    <source>
        <dbReference type="PROSITE-ProRule" id="PRU10018"/>
    </source>
</evidence>
<evidence type="ECO:0000269" key="3">
    <source>
    </source>
</evidence>
<evidence type="ECO:0000303" key="4">
    <source>
    </source>
</evidence>
<evidence type="ECO:0000303" key="5">
    <source>
    </source>
</evidence>
<name>MTA1_THAGE</name>
<feature type="chain" id="PRO_0000087856" description="Type II methyltransferase M.AgeI">
    <location>
        <begin position="1"/>
        <end position="429"/>
    </location>
</feature>
<feature type="domain" description="SAM-dependent MTase C5-type" evidence="1">
    <location>
        <begin position="1"/>
        <end position="429"/>
    </location>
</feature>
<feature type="active site" evidence="1 2">
    <location>
        <position position="80"/>
    </location>
</feature>
<accession>P94147</accession>
<organism>
    <name type="scientific">Thalassovita gelatinovora</name>
    <name type="common">Thalassobius gelatinovorus</name>
    <dbReference type="NCBI Taxonomy" id="53501"/>
    <lineage>
        <taxon>Bacteria</taxon>
        <taxon>Pseudomonadati</taxon>
        <taxon>Pseudomonadota</taxon>
        <taxon>Alphaproteobacteria</taxon>
        <taxon>Rhodobacterales</taxon>
        <taxon>Roseobacteraceae</taxon>
        <taxon>Thalassovita</taxon>
    </lineage>
</organism>
<protein>
    <recommendedName>
        <fullName evidence="4">Type II methyltransferase M.AgeI</fullName>
        <shortName evidence="5">M.AgeI</shortName>
        <ecNumber>2.1.1.37</ecNumber>
    </recommendedName>
    <alternativeName>
        <fullName>Cytosine-specific methyltransferase AgeI</fullName>
    </alternativeName>
    <alternativeName>
        <fullName>Modification methylase AgeI</fullName>
    </alternativeName>
</protein>
<proteinExistence type="inferred from homology"/>
<gene>
    <name type="primary">ageIM</name>
</gene>
<sequence>MKTIDLFCGAGGLGEGFRQAGFSALYANDHETPALATYKENHPDAVCSTDSIETVDPKKIREDLGVAPGQVDVVMGGPPCQGFSTYGQRRDDDARNQLYVPYFGFVEEFRPKAFLIENVVGLLSMSGGAVLADMVARAEALGYAADVVTLDACEYGVPQHRRRVFIFGAADGQRIDPPQPSHVNGKRSGVVLNDQPSLFFDGPSIQPALTVRDAISDLPDEVLVPRDTQKPMEYPEPPKTEYQRLMRGNSTELTHHSAKRMLGIRRLRLAMLHPGDYGTKIEERLADGGLNDELIDLMMGGAGMRDAAECRTQDREKEAALREVLKGGHTTPAKVMEFLDSQGFANKYRRLRWDAPSHTVVAHMARDCSDFVHPGIDRFVSVREAARFQSFPDTYRFPGSQFRQFRQIGNAVPPLLGRAMAETIKVAIS</sequence>
<keyword id="KW-0238">DNA-binding</keyword>
<keyword id="KW-0489">Methyltransferase</keyword>
<keyword id="KW-0680">Restriction system</keyword>
<keyword id="KW-0949">S-adenosyl-L-methionine</keyword>
<keyword id="KW-0808">Transferase</keyword>
<dbReference type="EC" id="2.1.1.37"/>
<dbReference type="EMBL" id="D78259">
    <property type="protein sequence ID" value="BAA11333.1"/>
    <property type="molecule type" value="Genomic_DNA"/>
</dbReference>
<dbReference type="EMBL" id="AF247972">
    <property type="protein sequence ID" value="AAF71525.1"/>
    <property type="molecule type" value="Genomic_DNA"/>
</dbReference>
<dbReference type="PIR" id="JC4656">
    <property type="entry name" value="JC4656"/>
</dbReference>
<dbReference type="RefSeq" id="WP_058263201.1">
    <property type="nucleotide sequence ID" value="NZ_CP051181.1"/>
</dbReference>
<dbReference type="SMR" id="P94147"/>
<dbReference type="STRING" id="53501.SAMN04488043_1052"/>
<dbReference type="REBASE" id="203781">
    <property type="entry name" value="M1.Lbr1106ORF1748P"/>
</dbReference>
<dbReference type="REBASE" id="3276">
    <property type="entry name" value="M.AgeI"/>
</dbReference>
<dbReference type="OrthoDB" id="9813719at2"/>
<dbReference type="PRO" id="PR:P94147"/>
<dbReference type="GO" id="GO:0003886">
    <property type="term" value="F:DNA (cytosine-5-)-methyltransferase activity"/>
    <property type="evidence" value="ECO:0007669"/>
    <property type="project" value="UniProtKB-EC"/>
</dbReference>
<dbReference type="GO" id="GO:0003677">
    <property type="term" value="F:DNA binding"/>
    <property type="evidence" value="ECO:0007669"/>
    <property type="project" value="UniProtKB-KW"/>
</dbReference>
<dbReference type="GO" id="GO:0009307">
    <property type="term" value="P:DNA restriction-modification system"/>
    <property type="evidence" value="ECO:0007669"/>
    <property type="project" value="UniProtKB-KW"/>
</dbReference>
<dbReference type="GO" id="GO:0032259">
    <property type="term" value="P:methylation"/>
    <property type="evidence" value="ECO:0007669"/>
    <property type="project" value="UniProtKB-KW"/>
</dbReference>
<dbReference type="GO" id="GO:0044027">
    <property type="term" value="P:negative regulation of gene expression via chromosomal CpG island methylation"/>
    <property type="evidence" value="ECO:0007669"/>
    <property type="project" value="TreeGrafter"/>
</dbReference>
<dbReference type="Gene3D" id="3.90.120.10">
    <property type="entry name" value="DNA Methylase, subunit A, domain 2"/>
    <property type="match status" value="1"/>
</dbReference>
<dbReference type="Gene3D" id="3.40.50.150">
    <property type="entry name" value="Vaccinia Virus protein VP39"/>
    <property type="match status" value="1"/>
</dbReference>
<dbReference type="InterPro" id="IPR050390">
    <property type="entry name" value="C5-Methyltransferase"/>
</dbReference>
<dbReference type="InterPro" id="IPR018117">
    <property type="entry name" value="C5_DNA_meth_AS"/>
</dbReference>
<dbReference type="InterPro" id="IPR001525">
    <property type="entry name" value="C5_MeTfrase"/>
</dbReference>
<dbReference type="InterPro" id="IPR031303">
    <property type="entry name" value="C5_meth_CS"/>
</dbReference>
<dbReference type="InterPro" id="IPR029063">
    <property type="entry name" value="SAM-dependent_MTases_sf"/>
</dbReference>
<dbReference type="NCBIfam" id="TIGR00675">
    <property type="entry name" value="dcm"/>
    <property type="match status" value="1"/>
</dbReference>
<dbReference type="PANTHER" id="PTHR10629">
    <property type="entry name" value="CYTOSINE-SPECIFIC METHYLTRANSFERASE"/>
    <property type="match status" value="1"/>
</dbReference>
<dbReference type="PANTHER" id="PTHR10629:SF52">
    <property type="entry name" value="DNA (CYTOSINE-5)-METHYLTRANSFERASE 1"/>
    <property type="match status" value="1"/>
</dbReference>
<dbReference type="Pfam" id="PF00145">
    <property type="entry name" value="DNA_methylase"/>
    <property type="match status" value="1"/>
</dbReference>
<dbReference type="PRINTS" id="PR00105">
    <property type="entry name" value="C5METTRFRASE"/>
</dbReference>
<dbReference type="SUPFAM" id="SSF53335">
    <property type="entry name" value="S-adenosyl-L-methionine-dependent methyltransferases"/>
    <property type="match status" value="1"/>
</dbReference>
<dbReference type="PROSITE" id="PS00094">
    <property type="entry name" value="C5_MTASE_1"/>
    <property type="match status" value="1"/>
</dbReference>
<dbReference type="PROSITE" id="PS00095">
    <property type="entry name" value="C5_MTASE_2"/>
    <property type="match status" value="1"/>
</dbReference>
<dbReference type="PROSITE" id="PS51679">
    <property type="entry name" value="SAM_MT_C5"/>
    <property type="match status" value="1"/>
</dbReference>